<protein>
    <recommendedName>
        <fullName>Putative oxidoreductase YceM</fullName>
        <ecNumber>1.-.-.-</ecNumber>
    </recommendedName>
</protein>
<comment type="similarity">
    <text evidence="1">Belongs to the Gfo/Idh/MocA family.</text>
</comment>
<comment type="caution">
    <text evidence="2 3">Was originally (PubMed:2680969) thought to be involved in mouse virulence. It was later shown that the mutation responsible for the virulence phenotype maps to nearby genes (PubMed:8288531).</text>
</comment>
<reference key="1">
    <citation type="submission" date="1993-09" db="EMBL/GenBank/DDBJ databases">
        <authorList>
            <person name="van Slooten J.-C."/>
            <person name="Okada T."/>
            <person name="Kutsukake K."/>
            <person name="Pechere J.-C."/>
            <person name="Harayama S."/>
        </authorList>
    </citation>
    <scope>NUCLEOTIDE SEQUENCE [GENOMIC DNA]</scope>
    <source>
        <strain>LT2 / KK1004</strain>
    </source>
</reference>
<reference key="2">
    <citation type="journal article" date="1994" name="Gene">
        <title>Sequence analysis of the flgA gene and its adjacent region in Salmonella typhimurium, and identification of another flagellar gene, flgN.</title>
        <authorList>
            <person name="Kutsukake K."/>
            <person name="Okada T."/>
            <person name="Yokoseki T."/>
            <person name="Iino T."/>
        </authorList>
    </citation>
    <scope>NUCLEOTIDE SEQUENCE [GENOMIC DNA]</scope>
    <source>
        <strain>LT2</strain>
    </source>
</reference>
<reference key="3">
    <citation type="journal article" date="2001" name="Nature">
        <title>Complete genome sequence of Salmonella enterica serovar Typhimurium LT2.</title>
        <authorList>
            <person name="McClelland M."/>
            <person name="Sanderson K.E."/>
            <person name="Spieth J."/>
            <person name="Clifton S.W."/>
            <person name="Latreille P."/>
            <person name="Courtney L."/>
            <person name="Porwollik S."/>
            <person name="Ali J."/>
            <person name="Dante M."/>
            <person name="Du F."/>
            <person name="Hou S."/>
            <person name="Layman D."/>
            <person name="Leonard S."/>
            <person name="Nguyen C."/>
            <person name="Scott K."/>
            <person name="Holmes A."/>
            <person name="Grewal N."/>
            <person name="Mulvaney E."/>
            <person name="Ryan E."/>
            <person name="Sun H."/>
            <person name="Florea L."/>
            <person name="Miller W."/>
            <person name="Stoneking T."/>
            <person name="Nhan M."/>
            <person name="Waterston R."/>
            <person name="Wilson R.K."/>
        </authorList>
    </citation>
    <scope>NUCLEOTIDE SEQUENCE [LARGE SCALE GENOMIC DNA]</scope>
    <source>
        <strain>LT2 / SGSC1412 / ATCC 700720</strain>
    </source>
</reference>
<reference key="4">
    <citation type="journal article" date="1989" name="Infect. Immun.">
        <title>A Salmonella typhimurium virulence gene linked to flg.</title>
        <authorList>
            <person name="Carsiotis M."/>
            <person name="Stocker B.A."/>
            <person name="Weinstein D.L."/>
            <person name="O'Brien A.D."/>
        </authorList>
    </citation>
    <scope>PROPOSED FUNCTION IN MOUSE VIRULENCE</scope>
    <source>
        <strain>LT2 / SL488</strain>
    </source>
</reference>
<reference key="5">
    <citation type="journal article" date="1994" name="J. Bacteriol.">
        <title>Mutation of flgM attenuates virulence of Salmonella typhimurium, and mutation of fliA represses the attenuated phenotype.</title>
        <authorList>
            <person name="Schmitt C.K."/>
            <person name="Darnell S.C."/>
            <person name="Tesh V.L."/>
            <person name="Stocker B.A.D."/>
            <person name="O'Brien A.D."/>
        </authorList>
    </citation>
    <scope>SHOWS THAT FLGM IS THE REAL MOUSE VIRULENCE GENE IN THIS REGION</scope>
    <source>
        <strain>SL3201</strain>
    </source>
</reference>
<sequence length="307" mass="34009">MRTLRIGIVGLGGIAQKAWLPVLTNTAGWTLQGAWSPSRDKALRICESWRIPYVDSLANLASSCDAVFVHSSTASHYAVVSELLNAGVHVCVDKPLAENLRDAERLVALAAQKKLTLMVGFNRRFAPLYRELKTRLGTAASLRMDKHRTDSVGPHDLRFTLLDDYLHVVDTALWLAGGEARLASGTLLTSESGEMCYAEHHFSADKLQITTSMHRRAGSQRESVQAVTDGGLYDVTDMREWREERGQGILIKPIPSWQTTLEQRGFVGCARHFIDCVQNQTVPETAGEQAILAQRVVEALWRDAISE</sequence>
<keyword id="KW-0560">Oxidoreductase</keyword>
<keyword id="KW-1185">Reference proteome</keyword>
<feature type="chain" id="PRO_0000096655" description="Putative oxidoreductase YceM">
    <location>
        <begin position="1"/>
        <end position="307"/>
    </location>
</feature>
<feature type="sequence conflict" description="In Ref. 1; CAA81133." evidence="1" ref="1">
    <original>D</original>
    <variation>H</variation>
    <location>
        <position position="163"/>
    </location>
</feature>
<feature type="sequence conflict" description="In Ref. 1; CAA81133." evidence="1" ref="1">
    <original>E</original>
    <variation>G</variation>
    <location>
        <position position="194"/>
    </location>
</feature>
<organism>
    <name type="scientific">Salmonella typhimurium (strain LT2 / SGSC1412 / ATCC 700720)</name>
    <dbReference type="NCBI Taxonomy" id="99287"/>
    <lineage>
        <taxon>Bacteria</taxon>
        <taxon>Pseudomonadati</taxon>
        <taxon>Pseudomonadota</taxon>
        <taxon>Gammaproteobacteria</taxon>
        <taxon>Enterobacterales</taxon>
        <taxon>Enterobacteriaceae</taxon>
        <taxon>Salmonella</taxon>
    </lineage>
</organism>
<accession>P37168</accession>
<evidence type="ECO:0000305" key="1"/>
<evidence type="ECO:0000305" key="2">
    <source>
    </source>
</evidence>
<evidence type="ECO:0000305" key="3">
    <source>
    </source>
</evidence>
<proteinExistence type="evidence at protein level"/>
<dbReference type="EC" id="1.-.-.-"/>
<dbReference type="EMBL" id="Z26133">
    <property type="protein sequence ID" value="CAA81133.1"/>
    <property type="molecule type" value="Genomic_DNA"/>
</dbReference>
<dbReference type="EMBL" id="D25292">
    <property type="protein sequence ID" value="BAA04981.1"/>
    <property type="molecule type" value="Genomic_DNA"/>
</dbReference>
<dbReference type="EMBL" id="AE006468">
    <property type="protein sequence ID" value="AAL20099.1"/>
    <property type="molecule type" value="Genomic_DNA"/>
</dbReference>
<dbReference type="PIR" id="S40270">
    <property type="entry name" value="S40270"/>
</dbReference>
<dbReference type="RefSeq" id="NP_460140.1">
    <property type="nucleotide sequence ID" value="NC_003197.2"/>
</dbReference>
<dbReference type="RefSeq" id="WP_001259734.1">
    <property type="nucleotide sequence ID" value="NC_003197.2"/>
</dbReference>
<dbReference type="SMR" id="P37168"/>
<dbReference type="STRING" id="99287.STM1169"/>
<dbReference type="PaxDb" id="99287-STM1169"/>
<dbReference type="GeneID" id="1252687"/>
<dbReference type="KEGG" id="stm:STM1169"/>
<dbReference type="PATRIC" id="fig|99287.12.peg.1237"/>
<dbReference type="HOGENOM" id="CLU_023194_23_0_6"/>
<dbReference type="PhylomeDB" id="P37168"/>
<dbReference type="BioCyc" id="SENT99287:STM1169-MONOMER"/>
<dbReference type="Proteomes" id="UP000001014">
    <property type="component" value="Chromosome"/>
</dbReference>
<dbReference type="GO" id="GO:0000166">
    <property type="term" value="F:nucleotide binding"/>
    <property type="evidence" value="ECO:0007669"/>
    <property type="project" value="InterPro"/>
</dbReference>
<dbReference type="GO" id="GO:0016491">
    <property type="term" value="F:oxidoreductase activity"/>
    <property type="evidence" value="ECO:0007669"/>
    <property type="project" value="UniProtKB-KW"/>
</dbReference>
<dbReference type="Gene3D" id="3.30.360.10">
    <property type="entry name" value="Dihydrodipicolinate Reductase, domain 2"/>
    <property type="match status" value="1"/>
</dbReference>
<dbReference type="Gene3D" id="3.40.50.720">
    <property type="entry name" value="NAD(P)-binding Rossmann-like Domain"/>
    <property type="match status" value="1"/>
</dbReference>
<dbReference type="InterPro" id="IPR000683">
    <property type="entry name" value="Gfo/Idh/MocA-like_OxRdtase_N"/>
</dbReference>
<dbReference type="InterPro" id="IPR051317">
    <property type="entry name" value="Gfo/Idh/MocA_oxidoreduct"/>
</dbReference>
<dbReference type="InterPro" id="IPR036291">
    <property type="entry name" value="NAD(P)-bd_dom_sf"/>
</dbReference>
<dbReference type="InterPro" id="IPR048477">
    <property type="entry name" value="YceM-like_C"/>
</dbReference>
<dbReference type="PANTHER" id="PTHR43708">
    <property type="entry name" value="CONSERVED EXPRESSED OXIDOREDUCTASE (EUROFUNG)"/>
    <property type="match status" value="1"/>
</dbReference>
<dbReference type="PANTHER" id="PTHR43708:SF4">
    <property type="entry name" value="OXIDOREDUCTASE YCEM-RELATED"/>
    <property type="match status" value="1"/>
</dbReference>
<dbReference type="Pfam" id="PF01408">
    <property type="entry name" value="GFO_IDH_MocA"/>
    <property type="match status" value="1"/>
</dbReference>
<dbReference type="Pfam" id="PF21378">
    <property type="entry name" value="YceM-like_C"/>
    <property type="match status" value="1"/>
</dbReference>
<dbReference type="SUPFAM" id="SSF55347">
    <property type="entry name" value="Glyceraldehyde-3-phosphate dehydrogenase-like, C-terminal domain"/>
    <property type="match status" value="1"/>
</dbReference>
<dbReference type="SUPFAM" id="SSF51735">
    <property type="entry name" value="NAD(P)-binding Rossmann-fold domains"/>
    <property type="match status" value="1"/>
</dbReference>
<name>YCEM_SALTY</name>
<gene>
    <name type="primary">yceM</name>
    <name type="synonym">mviM</name>
    <name type="ordered locus">STM1169</name>
</gene>